<evidence type="ECO:0000255" key="1">
    <source>
        <dbReference type="HAMAP-Rule" id="MF_03148"/>
    </source>
</evidence>
<gene>
    <name type="ORF">AFUA_5G05560</name>
</gene>
<dbReference type="EC" id="3.6.1.66" evidence="1"/>
<dbReference type="EMBL" id="AAHF01000003">
    <property type="protein sequence ID" value="EAL92037.1"/>
    <property type="molecule type" value="Genomic_DNA"/>
</dbReference>
<dbReference type="RefSeq" id="XP_754075.1">
    <property type="nucleotide sequence ID" value="XM_748982.1"/>
</dbReference>
<dbReference type="SMR" id="Q4WTN9"/>
<dbReference type="FunCoup" id="Q4WTN9">
    <property type="interactions" value="744"/>
</dbReference>
<dbReference type="STRING" id="330879.Q4WTN9"/>
<dbReference type="EnsemblFungi" id="EAL92037">
    <property type="protein sequence ID" value="EAL92037"/>
    <property type="gene ID" value="AFUA_5G05560"/>
</dbReference>
<dbReference type="GeneID" id="3511159"/>
<dbReference type="KEGG" id="afm:AFUA_5G05560"/>
<dbReference type="VEuPathDB" id="FungiDB:Afu5g05560"/>
<dbReference type="eggNOG" id="KOG3222">
    <property type="taxonomic scope" value="Eukaryota"/>
</dbReference>
<dbReference type="HOGENOM" id="CLU_082080_1_1_1"/>
<dbReference type="InParanoid" id="Q4WTN9"/>
<dbReference type="OMA" id="YDPIFQP"/>
<dbReference type="OrthoDB" id="6288734at2759"/>
<dbReference type="Proteomes" id="UP000002530">
    <property type="component" value="Chromosome 5"/>
</dbReference>
<dbReference type="GO" id="GO:0005737">
    <property type="term" value="C:cytoplasm"/>
    <property type="evidence" value="ECO:0000318"/>
    <property type="project" value="GO_Central"/>
</dbReference>
<dbReference type="GO" id="GO:0005634">
    <property type="term" value="C:nucleus"/>
    <property type="evidence" value="ECO:0007669"/>
    <property type="project" value="UniProtKB-SubCell"/>
</dbReference>
<dbReference type="GO" id="GO:0035870">
    <property type="term" value="F:dITP diphosphatase activity"/>
    <property type="evidence" value="ECO:0007669"/>
    <property type="project" value="RHEA"/>
</dbReference>
<dbReference type="GO" id="GO:0036220">
    <property type="term" value="F:ITP diphosphatase activity"/>
    <property type="evidence" value="ECO:0007669"/>
    <property type="project" value="RHEA"/>
</dbReference>
<dbReference type="GO" id="GO:0046872">
    <property type="term" value="F:metal ion binding"/>
    <property type="evidence" value="ECO:0007669"/>
    <property type="project" value="UniProtKB-KW"/>
</dbReference>
<dbReference type="GO" id="GO:0047429">
    <property type="term" value="F:nucleoside triphosphate diphosphatase activity"/>
    <property type="evidence" value="ECO:0000318"/>
    <property type="project" value="GO_Central"/>
</dbReference>
<dbReference type="GO" id="GO:0000166">
    <property type="term" value="F:nucleotide binding"/>
    <property type="evidence" value="ECO:0007669"/>
    <property type="project" value="UniProtKB-KW"/>
</dbReference>
<dbReference type="GO" id="GO:0036222">
    <property type="term" value="F:XTP diphosphatase activity"/>
    <property type="evidence" value="ECO:0007669"/>
    <property type="project" value="RHEA"/>
</dbReference>
<dbReference type="GO" id="GO:0009204">
    <property type="term" value="P:deoxyribonucleoside triphosphate catabolic process"/>
    <property type="evidence" value="ECO:0007669"/>
    <property type="project" value="UniProtKB-UniRule"/>
</dbReference>
<dbReference type="GO" id="GO:0009143">
    <property type="term" value="P:nucleoside triphosphate catabolic process"/>
    <property type="evidence" value="ECO:0000318"/>
    <property type="project" value="GO_Central"/>
</dbReference>
<dbReference type="GO" id="GO:0009117">
    <property type="term" value="P:nucleotide metabolic process"/>
    <property type="evidence" value="ECO:0007669"/>
    <property type="project" value="UniProtKB-KW"/>
</dbReference>
<dbReference type="CDD" id="cd00515">
    <property type="entry name" value="HAM1"/>
    <property type="match status" value="1"/>
</dbReference>
<dbReference type="FunFam" id="3.90.950.10:FF:000003">
    <property type="entry name" value="Inosine triphosphate pyrophosphatase"/>
    <property type="match status" value="1"/>
</dbReference>
<dbReference type="Gene3D" id="3.90.950.10">
    <property type="match status" value="1"/>
</dbReference>
<dbReference type="HAMAP" id="MF_03148">
    <property type="entry name" value="HAM1_NTPase"/>
    <property type="match status" value="1"/>
</dbReference>
<dbReference type="InterPro" id="IPR027502">
    <property type="entry name" value="ITPase"/>
</dbReference>
<dbReference type="InterPro" id="IPR029001">
    <property type="entry name" value="ITPase-like_fam"/>
</dbReference>
<dbReference type="InterPro" id="IPR002637">
    <property type="entry name" value="RdgB/HAM1"/>
</dbReference>
<dbReference type="NCBIfam" id="TIGR00042">
    <property type="entry name" value="RdgB/HAM1 family non-canonical purine NTP pyrophosphatase"/>
    <property type="match status" value="1"/>
</dbReference>
<dbReference type="PANTHER" id="PTHR11067:SF9">
    <property type="entry name" value="INOSINE TRIPHOSPHATE PYROPHOSPHATASE"/>
    <property type="match status" value="1"/>
</dbReference>
<dbReference type="PANTHER" id="PTHR11067">
    <property type="entry name" value="INOSINE TRIPHOSPHATE PYROPHOSPHATASE/HAM1 PROTEIN"/>
    <property type="match status" value="1"/>
</dbReference>
<dbReference type="Pfam" id="PF01725">
    <property type="entry name" value="Ham1p_like"/>
    <property type="match status" value="1"/>
</dbReference>
<dbReference type="SUPFAM" id="SSF52972">
    <property type="entry name" value="ITPase-like"/>
    <property type="match status" value="1"/>
</dbReference>
<proteinExistence type="inferred from homology"/>
<keyword id="KW-0963">Cytoplasm</keyword>
<keyword id="KW-0378">Hydrolase</keyword>
<keyword id="KW-0460">Magnesium</keyword>
<keyword id="KW-0464">Manganese</keyword>
<keyword id="KW-0479">Metal-binding</keyword>
<keyword id="KW-0546">Nucleotide metabolism</keyword>
<keyword id="KW-0547">Nucleotide-binding</keyword>
<keyword id="KW-0539">Nucleus</keyword>
<keyword id="KW-1185">Reference proteome</keyword>
<sequence>MIPTVKLNFITSNKNKLAEVKAILGNVVEIDSQAIEVPEIQGSIEEIAKEKARRAAEEIGGPVLTEDTALGFRALKGLPGAYIKHFLSALGHDGLNKMLDSFEDRSAEAVCTFAFCRGPGEEPILFQGRTEGIIVRPRGPLNFGWDPIFEHNGMTYAEMDKEEKNRVSHRYKALAKLKQWLEDGTLP</sequence>
<comment type="function">
    <text evidence="1">Pyrophosphatase that hydrolyzes non-canonical purine nucleotides such as inosine triphosphate (ITP), deoxyinosine triphosphate (dITP) or xanthosine 5'-triphosphate (XTP) to their respective monophosphate derivatives. The enzyme does not distinguish between the deoxy- and ribose forms. Probably excludes non-canonical purines from RNA and DNA precursor pools, thus preventing their incorporation into RNA and DNA and avoiding chromosomal lesions.</text>
</comment>
<comment type="catalytic activity">
    <reaction evidence="1">
        <text>ITP + H2O = IMP + diphosphate + H(+)</text>
        <dbReference type="Rhea" id="RHEA:29399"/>
        <dbReference type="ChEBI" id="CHEBI:15377"/>
        <dbReference type="ChEBI" id="CHEBI:15378"/>
        <dbReference type="ChEBI" id="CHEBI:33019"/>
        <dbReference type="ChEBI" id="CHEBI:58053"/>
        <dbReference type="ChEBI" id="CHEBI:61402"/>
        <dbReference type="EC" id="3.6.1.66"/>
    </reaction>
    <physiologicalReaction direction="left-to-right" evidence="1">
        <dbReference type="Rhea" id="RHEA:29400"/>
    </physiologicalReaction>
</comment>
<comment type="catalytic activity">
    <reaction evidence="1">
        <text>dITP + H2O = dIMP + diphosphate + H(+)</text>
        <dbReference type="Rhea" id="RHEA:28342"/>
        <dbReference type="ChEBI" id="CHEBI:15377"/>
        <dbReference type="ChEBI" id="CHEBI:15378"/>
        <dbReference type="ChEBI" id="CHEBI:33019"/>
        <dbReference type="ChEBI" id="CHEBI:61194"/>
        <dbReference type="ChEBI" id="CHEBI:61382"/>
        <dbReference type="EC" id="3.6.1.66"/>
    </reaction>
    <physiologicalReaction direction="left-to-right" evidence="1">
        <dbReference type="Rhea" id="RHEA:28343"/>
    </physiologicalReaction>
</comment>
<comment type="catalytic activity">
    <reaction evidence="1">
        <text>XTP + H2O = XMP + diphosphate + H(+)</text>
        <dbReference type="Rhea" id="RHEA:28610"/>
        <dbReference type="ChEBI" id="CHEBI:15377"/>
        <dbReference type="ChEBI" id="CHEBI:15378"/>
        <dbReference type="ChEBI" id="CHEBI:33019"/>
        <dbReference type="ChEBI" id="CHEBI:57464"/>
        <dbReference type="ChEBI" id="CHEBI:61314"/>
        <dbReference type="EC" id="3.6.1.66"/>
    </reaction>
    <physiologicalReaction direction="left-to-right" evidence="1">
        <dbReference type="Rhea" id="RHEA:28611"/>
    </physiologicalReaction>
</comment>
<comment type="cofactor">
    <cofactor evidence="1">
        <name>Mg(2+)</name>
        <dbReference type="ChEBI" id="CHEBI:18420"/>
    </cofactor>
    <cofactor evidence="1">
        <name>Mn(2+)</name>
        <dbReference type="ChEBI" id="CHEBI:29035"/>
    </cofactor>
    <text evidence="1">Binds 1 divalent metal cation per subunit; can use either Mg(2+) or Mn(2+).</text>
</comment>
<comment type="subunit">
    <text evidence="1">Homodimer.</text>
</comment>
<comment type="subcellular location">
    <subcellularLocation>
        <location evidence="1">Cytoplasm</location>
    </subcellularLocation>
    <subcellularLocation>
        <location evidence="1">Nucleus</location>
    </subcellularLocation>
</comment>
<comment type="similarity">
    <text evidence="1">Belongs to the HAM1 NTPase family.</text>
</comment>
<name>ITPA_ASPFU</name>
<accession>Q4WTN9</accession>
<organism>
    <name type="scientific">Aspergillus fumigatus (strain ATCC MYA-4609 / CBS 101355 / FGSC A1100 / Af293)</name>
    <name type="common">Neosartorya fumigata</name>
    <dbReference type="NCBI Taxonomy" id="330879"/>
    <lineage>
        <taxon>Eukaryota</taxon>
        <taxon>Fungi</taxon>
        <taxon>Dikarya</taxon>
        <taxon>Ascomycota</taxon>
        <taxon>Pezizomycotina</taxon>
        <taxon>Eurotiomycetes</taxon>
        <taxon>Eurotiomycetidae</taxon>
        <taxon>Eurotiales</taxon>
        <taxon>Aspergillaceae</taxon>
        <taxon>Aspergillus</taxon>
        <taxon>Aspergillus subgen. Fumigati</taxon>
    </lineage>
</organism>
<reference key="1">
    <citation type="journal article" date="2005" name="Nature">
        <title>Genomic sequence of the pathogenic and allergenic filamentous fungus Aspergillus fumigatus.</title>
        <authorList>
            <person name="Nierman W.C."/>
            <person name="Pain A."/>
            <person name="Anderson M.J."/>
            <person name="Wortman J.R."/>
            <person name="Kim H.S."/>
            <person name="Arroyo J."/>
            <person name="Berriman M."/>
            <person name="Abe K."/>
            <person name="Archer D.B."/>
            <person name="Bermejo C."/>
            <person name="Bennett J.W."/>
            <person name="Bowyer P."/>
            <person name="Chen D."/>
            <person name="Collins M."/>
            <person name="Coulsen R."/>
            <person name="Davies R."/>
            <person name="Dyer P.S."/>
            <person name="Farman M.L."/>
            <person name="Fedorova N."/>
            <person name="Fedorova N.D."/>
            <person name="Feldblyum T.V."/>
            <person name="Fischer R."/>
            <person name="Fosker N."/>
            <person name="Fraser A."/>
            <person name="Garcia J.L."/>
            <person name="Garcia M.J."/>
            <person name="Goble A."/>
            <person name="Goldman G.H."/>
            <person name="Gomi K."/>
            <person name="Griffith-Jones S."/>
            <person name="Gwilliam R."/>
            <person name="Haas B.J."/>
            <person name="Haas H."/>
            <person name="Harris D.E."/>
            <person name="Horiuchi H."/>
            <person name="Huang J."/>
            <person name="Humphray S."/>
            <person name="Jimenez J."/>
            <person name="Keller N."/>
            <person name="Khouri H."/>
            <person name="Kitamoto K."/>
            <person name="Kobayashi T."/>
            <person name="Konzack S."/>
            <person name="Kulkarni R."/>
            <person name="Kumagai T."/>
            <person name="Lafton A."/>
            <person name="Latge J.-P."/>
            <person name="Li W."/>
            <person name="Lord A."/>
            <person name="Lu C."/>
            <person name="Majoros W.H."/>
            <person name="May G.S."/>
            <person name="Miller B.L."/>
            <person name="Mohamoud Y."/>
            <person name="Molina M."/>
            <person name="Monod M."/>
            <person name="Mouyna I."/>
            <person name="Mulligan S."/>
            <person name="Murphy L.D."/>
            <person name="O'Neil S."/>
            <person name="Paulsen I."/>
            <person name="Penalva M.A."/>
            <person name="Pertea M."/>
            <person name="Price C."/>
            <person name="Pritchard B.L."/>
            <person name="Quail M.A."/>
            <person name="Rabbinowitsch E."/>
            <person name="Rawlins N."/>
            <person name="Rajandream M.A."/>
            <person name="Reichard U."/>
            <person name="Renauld H."/>
            <person name="Robson G.D."/>
            <person name="Rodriguez de Cordoba S."/>
            <person name="Rodriguez-Pena J.M."/>
            <person name="Ronning C.M."/>
            <person name="Rutter S."/>
            <person name="Salzberg S.L."/>
            <person name="Sanchez M."/>
            <person name="Sanchez-Ferrero J.C."/>
            <person name="Saunders D."/>
            <person name="Seeger K."/>
            <person name="Squares R."/>
            <person name="Squares S."/>
            <person name="Takeuchi M."/>
            <person name="Tekaia F."/>
            <person name="Turner G."/>
            <person name="Vazquez de Aldana C.R."/>
            <person name="Weidman J."/>
            <person name="White O."/>
            <person name="Woodward J.R."/>
            <person name="Yu J.-H."/>
            <person name="Fraser C.M."/>
            <person name="Galagan J.E."/>
            <person name="Asai K."/>
            <person name="Machida M."/>
            <person name="Hall N."/>
            <person name="Barrell B.G."/>
            <person name="Denning D.W."/>
        </authorList>
    </citation>
    <scope>NUCLEOTIDE SEQUENCE [LARGE SCALE GENOMIC DNA]</scope>
    <source>
        <strain>ATCC MYA-4609 / CBS 101355 / FGSC A1100 / Af293</strain>
    </source>
</reference>
<feature type="chain" id="PRO_0000413144" description="Inosine triphosphate pyrophosphatase">
    <location>
        <begin position="1"/>
        <end position="187"/>
    </location>
</feature>
<feature type="binding site" evidence="1">
    <location>
        <begin position="11"/>
        <end position="16"/>
    </location>
    <ligand>
        <name>ITP</name>
        <dbReference type="ChEBI" id="CHEBI:61402"/>
    </ligand>
</feature>
<feature type="binding site" evidence="1">
    <location>
        <position position="39"/>
    </location>
    <ligand>
        <name>Mg(2+)</name>
        <dbReference type="ChEBI" id="CHEBI:18420"/>
    </ligand>
</feature>
<feature type="binding site" evidence="1">
    <location>
        <position position="51"/>
    </location>
    <ligand>
        <name>ITP</name>
        <dbReference type="ChEBI" id="CHEBI:61402"/>
    </ligand>
</feature>
<feature type="binding site" evidence="1">
    <location>
        <begin position="67"/>
        <end position="68"/>
    </location>
    <ligand>
        <name>ITP</name>
        <dbReference type="ChEBI" id="CHEBI:61402"/>
    </ligand>
</feature>
<feature type="binding site" evidence="1">
    <location>
        <position position="84"/>
    </location>
    <ligand>
        <name>ITP</name>
        <dbReference type="ChEBI" id="CHEBI:61402"/>
    </ligand>
</feature>
<feature type="binding site" evidence="1">
    <location>
        <begin position="143"/>
        <end position="146"/>
    </location>
    <ligand>
        <name>ITP</name>
        <dbReference type="ChEBI" id="CHEBI:61402"/>
    </ligand>
</feature>
<feature type="binding site" evidence="1">
    <location>
        <position position="164"/>
    </location>
    <ligand>
        <name>ITP</name>
        <dbReference type="ChEBI" id="CHEBI:61402"/>
    </ligand>
</feature>
<feature type="binding site" evidence="1">
    <location>
        <begin position="169"/>
        <end position="170"/>
    </location>
    <ligand>
        <name>ITP</name>
        <dbReference type="ChEBI" id="CHEBI:61402"/>
    </ligand>
</feature>
<protein>
    <recommendedName>
        <fullName evidence="1">Inosine triphosphate pyrophosphatase</fullName>
        <shortName evidence="1">ITPase</shortName>
        <shortName evidence="1">Inosine triphosphatase</shortName>
        <ecNumber evidence="1">3.6.1.66</ecNumber>
    </recommendedName>
    <alternativeName>
        <fullName evidence="1">Non-canonical purine NTP pyrophosphatase</fullName>
    </alternativeName>
    <alternativeName>
        <fullName evidence="1">Non-standard purine NTP pyrophosphatase</fullName>
    </alternativeName>
    <alternativeName>
        <fullName evidence="1">Nucleoside-triphosphate diphosphatase</fullName>
    </alternativeName>
    <alternativeName>
        <fullName evidence="1">Nucleoside-triphosphate pyrophosphatase</fullName>
        <shortName evidence="1">NTPase</shortName>
    </alternativeName>
    <alternativeName>
        <fullName evidence="1">XTP/dITP diphosphatase</fullName>
    </alternativeName>
</protein>